<protein>
    <recommendedName>
        <fullName evidence="1">NADH-quinone oxidoreductase subunit B</fullName>
        <ecNumber evidence="1">7.1.1.-</ecNumber>
    </recommendedName>
    <alternativeName>
        <fullName evidence="1">NADH dehydrogenase I subunit B</fullName>
    </alternativeName>
    <alternativeName>
        <fullName evidence="1">NDH-1 subunit B</fullName>
    </alternativeName>
</protein>
<evidence type="ECO:0000255" key="1">
    <source>
        <dbReference type="HAMAP-Rule" id="MF_01356"/>
    </source>
</evidence>
<name>NUOB_YERE8</name>
<accession>A1JLG4</accession>
<dbReference type="EC" id="7.1.1.-" evidence="1"/>
<dbReference type="EMBL" id="AM286415">
    <property type="protein sequence ID" value="CAL11433.1"/>
    <property type="molecule type" value="Genomic_DNA"/>
</dbReference>
<dbReference type="RefSeq" id="WP_002210278.1">
    <property type="nucleotide sequence ID" value="NC_008800.1"/>
</dbReference>
<dbReference type="RefSeq" id="YP_001005661.1">
    <property type="nucleotide sequence ID" value="NC_008800.1"/>
</dbReference>
<dbReference type="SMR" id="A1JLG4"/>
<dbReference type="KEGG" id="yen:YE1345"/>
<dbReference type="PATRIC" id="fig|393305.7.peg.1464"/>
<dbReference type="eggNOG" id="COG0377">
    <property type="taxonomic scope" value="Bacteria"/>
</dbReference>
<dbReference type="HOGENOM" id="CLU_055737_7_3_6"/>
<dbReference type="OrthoDB" id="9786737at2"/>
<dbReference type="Proteomes" id="UP000000642">
    <property type="component" value="Chromosome"/>
</dbReference>
<dbReference type="GO" id="GO:0005886">
    <property type="term" value="C:plasma membrane"/>
    <property type="evidence" value="ECO:0007669"/>
    <property type="project" value="UniProtKB-SubCell"/>
</dbReference>
<dbReference type="GO" id="GO:0045271">
    <property type="term" value="C:respiratory chain complex I"/>
    <property type="evidence" value="ECO:0007669"/>
    <property type="project" value="TreeGrafter"/>
</dbReference>
<dbReference type="GO" id="GO:0051539">
    <property type="term" value="F:4 iron, 4 sulfur cluster binding"/>
    <property type="evidence" value="ECO:0007669"/>
    <property type="project" value="UniProtKB-KW"/>
</dbReference>
<dbReference type="GO" id="GO:0005506">
    <property type="term" value="F:iron ion binding"/>
    <property type="evidence" value="ECO:0007669"/>
    <property type="project" value="UniProtKB-UniRule"/>
</dbReference>
<dbReference type="GO" id="GO:0008137">
    <property type="term" value="F:NADH dehydrogenase (ubiquinone) activity"/>
    <property type="evidence" value="ECO:0007669"/>
    <property type="project" value="InterPro"/>
</dbReference>
<dbReference type="GO" id="GO:0050136">
    <property type="term" value="F:NADH:ubiquinone reductase (non-electrogenic) activity"/>
    <property type="evidence" value="ECO:0007669"/>
    <property type="project" value="UniProtKB-UniRule"/>
</dbReference>
<dbReference type="GO" id="GO:0048038">
    <property type="term" value="F:quinone binding"/>
    <property type="evidence" value="ECO:0007669"/>
    <property type="project" value="UniProtKB-KW"/>
</dbReference>
<dbReference type="GO" id="GO:0009060">
    <property type="term" value="P:aerobic respiration"/>
    <property type="evidence" value="ECO:0007669"/>
    <property type="project" value="TreeGrafter"/>
</dbReference>
<dbReference type="GO" id="GO:0015990">
    <property type="term" value="P:electron transport coupled proton transport"/>
    <property type="evidence" value="ECO:0007669"/>
    <property type="project" value="TreeGrafter"/>
</dbReference>
<dbReference type="FunFam" id="3.40.50.12280:FF:000002">
    <property type="entry name" value="NADH-quinone oxidoreductase subunit B"/>
    <property type="match status" value="1"/>
</dbReference>
<dbReference type="Gene3D" id="3.40.50.12280">
    <property type="match status" value="1"/>
</dbReference>
<dbReference type="HAMAP" id="MF_01356">
    <property type="entry name" value="NDH1_NuoB"/>
    <property type="match status" value="1"/>
</dbReference>
<dbReference type="InterPro" id="IPR006137">
    <property type="entry name" value="NADH_UbQ_OxRdtase-like_20kDa"/>
</dbReference>
<dbReference type="InterPro" id="IPR006138">
    <property type="entry name" value="NADH_UQ_OxRdtase_20Kd_su"/>
</dbReference>
<dbReference type="NCBIfam" id="TIGR01957">
    <property type="entry name" value="nuoB_fam"/>
    <property type="match status" value="1"/>
</dbReference>
<dbReference type="NCBIfam" id="NF005012">
    <property type="entry name" value="PRK06411.1"/>
    <property type="match status" value="1"/>
</dbReference>
<dbReference type="PANTHER" id="PTHR11995">
    <property type="entry name" value="NADH DEHYDROGENASE"/>
    <property type="match status" value="1"/>
</dbReference>
<dbReference type="PANTHER" id="PTHR11995:SF14">
    <property type="entry name" value="NADH DEHYDROGENASE [UBIQUINONE] IRON-SULFUR PROTEIN 7, MITOCHONDRIAL"/>
    <property type="match status" value="1"/>
</dbReference>
<dbReference type="Pfam" id="PF01058">
    <property type="entry name" value="Oxidored_q6"/>
    <property type="match status" value="1"/>
</dbReference>
<dbReference type="SUPFAM" id="SSF56770">
    <property type="entry name" value="HydA/Nqo6-like"/>
    <property type="match status" value="1"/>
</dbReference>
<dbReference type="PROSITE" id="PS01150">
    <property type="entry name" value="COMPLEX1_20K"/>
    <property type="match status" value="1"/>
</dbReference>
<gene>
    <name evidence="1" type="primary">nuoB</name>
    <name type="ordered locus">YE1345</name>
</gene>
<keyword id="KW-0004">4Fe-4S</keyword>
<keyword id="KW-0997">Cell inner membrane</keyword>
<keyword id="KW-1003">Cell membrane</keyword>
<keyword id="KW-0408">Iron</keyword>
<keyword id="KW-0411">Iron-sulfur</keyword>
<keyword id="KW-0472">Membrane</keyword>
<keyword id="KW-0479">Metal-binding</keyword>
<keyword id="KW-0520">NAD</keyword>
<keyword id="KW-0874">Quinone</keyword>
<keyword id="KW-1278">Translocase</keyword>
<keyword id="KW-0813">Transport</keyword>
<keyword id="KW-0830">Ubiquinone</keyword>
<comment type="function">
    <text evidence="1">NDH-1 shuttles electrons from NADH, via FMN and iron-sulfur (Fe-S) centers, to quinones in the respiratory chain. The immediate electron acceptor for the enzyme in this species is believed to be ubiquinone. Couples the redox reaction to proton translocation (for every two electrons transferred, four hydrogen ions are translocated across the cytoplasmic membrane), and thus conserves the redox energy in a proton gradient.</text>
</comment>
<comment type="catalytic activity">
    <reaction evidence="1">
        <text>a quinone + NADH + 5 H(+)(in) = a quinol + NAD(+) + 4 H(+)(out)</text>
        <dbReference type="Rhea" id="RHEA:57888"/>
        <dbReference type="ChEBI" id="CHEBI:15378"/>
        <dbReference type="ChEBI" id="CHEBI:24646"/>
        <dbReference type="ChEBI" id="CHEBI:57540"/>
        <dbReference type="ChEBI" id="CHEBI:57945"/>
        <dbReference type="ChEBI" id="CHEBI:132124"/>
    </reaction>
</comment>
<comment type="cofactor">
    <cofactor evidence="1">
        <name>[4Fe-4S] cluster</name>
        <dbReference type="ChEBI" id="CHEBI:49883"/>
    </cofactor>
    <text evidence="1">Binds 1 [4Fe-4S] cluster.</text>
</comment>
<comment type="subunit">
    <text evidence="1">NDH-1 is composed of 13 different subunits. Subunits NuoB, CD, E, F, and G constitute the peripheral sector of the complex.</text>
</comment>
<comment type="subcellular location">
    <subcellularLocation>
        <location evidence="1">Cell inner membrane</location>
        <topology evidence="1">Peripheral membrane protein</topology>
        <orientation evidence="1">Cytoplasmic side</orientation>
    </subcellularLocation>
</comment>
<comment type="similarity">
    <text evidence="1">Belongs to the complex I 20 kDa subunit family.</text>
</comment>
<sequence>MDYTLTRIDPNGENDRYPLQTQETVSGDPLEQHVHRSVYMGKLENAMHDMVNWGRKNSLWPYNFGLSCCYVEMVTSFTAVHDVARFGAEVLRASPRQADFMVVAGTCFTKMAPVIQRLYEQMLEPKWVISMGACANSGGMYDIYSVVQGVDKFLPVDVYIPGCPPRPEAYMQALLLLQESIGKERRPLSWVVGDQGVYRANMQPERERKHAERIAVTNLRTPDEI</sequence>
<feature type="chain" id="PRO_0000376409" description="NADH-quinone oxidoreductase subunit B">
    <location>
        <begin position="1"/>
        <end position="225"/>
    </location>
</feature>
<feature type="binding site" evidence="1">
    <location>
        <position position="68"/>
    </location>
    <ligand>
        <name>[4Fe-4S] cluster</name>
        <dbReference type="ChEBI" id="CHEBI:49883"/>
    </ligand>
</feature>
<feature type="binding site" evidence="1">
    <location>
        <position position="69"/>
    </location>
    <ligand>
        <name>[4Fe-4S] cluster</name>
        <dbReference type="ChEBI" id="CHEBI:49883"/>
    </ligand>
</feature>
<feature type="binding site" evidence="1">
    <location>
        <position position="134"/>
    </location>
    <ligand>
        <name>[4Fe-4S] cluster</name>
        <dbReference type="ChEBI" id="CHEBI:49883"/>
    </ligand>
</feature>
<feature type="binding site" evidence="1">
    <location>
        <position position="163"/>
    </location>
    <ligand>
        <name>[4Fe-4S] cluster</name>
        <dbReference type="ChEBI" id="CHEBI:49883"/>
    </ligand>
</feature>
<organism>
    <name type="scientific">Yersinia enterocolitica serotype O:8 / biotype 1B (strain NCTC 13174 / 8081)</name>
    <dbReference type="NCBI Taxonomy" id="393305"/>
    <lineage>
        <taxon>Bacteria</taxon>
        <taxon>Pseudomonadati</taxon>
        <taxon>Pseudomonadota</taxon>
        <taxon>Gammaproteobacteria</taxon>
        <taxon>Enterobacterales</taxon>
        <taxon>Yersiniaceae</taxon>
        <taxon>Yersinia</taxon>
    </lineage>
</organism>
<reference key="1">
    <citation type="journal article" date="2006" name="PLoS Genet.">
        <title>The complete genome sequence and comparative genome analysis of the high pathogenicity Yersinia enterocolitica strain 8081.</title>
        <authorList>
            <person name="Thomson N.R."/>
            <person name="Howard S."/>
            <person name="Wren B.W."/>
            <person name="Holden M.T.G."/>
            <person name="Crossman L."/>
            <person name="Challis G.L."/>
            <person name="Churcher C."/>
            <person name="Mungall K."/>
            <person name="Brooks K."/>
            <person name="Chillingworth T."/>
            <person name="Feltwell T."/>
            <person name="Abdellah Z."/>
            <person name="Hauser H."/>
            <person name="Jagels K."/>
            <person name="Maddison M."/>
            <person name="Moule S."/>
            <person name="Sanders M."/>
            <person name="Whitehead S."/>
            <person name="Quail M.A."/>
            <person name="Dougan G."/>
            <person name="Parkhill J."/>
            <person name="Prentice M.B."/>
        </authorList>
    </citation>
    <scope>NUCLEOTIDE SEQUENCE [LARGE SCALE GENOMIC DNA]</scope>
    <source>
        <strain>NCTC 13174 / 8081</strain>
    </source>
</reference>
<proteinExistence type="inferred from homology"/>